<gene>
    <name type="primary">OCLN</name>
</gene>
<comment type="function">
    <text evidence="9">May play a role in the formation and regulation of the tight junction (TJ) paracellular permeability barrier. It is able to induce adhesion when expressed in cells lacking tight junctions.</text>
</comment>
<comment type="function">
    <text evidence="11 13">(Microbial infection) Acts as a coreceptor for hepatitis C virus (HCV) in hepatocytes.</text>
</comment>
<comment type="subunit">
    <text evidence="2 7 8 13 15 16">Interacts with TJP1/ZO1 (PubMed:19017651). Interacts with VAPA (PubMed:10523508). Interacts with CLDN1, CLDN6, CLDN9, CLDN11, CLDN12 and CLDN17 (PubMed:20375010). Interacts with PLSCR1 (PubMed:21806988). Interacts with LSR, ILDR1 and ILDR2 (PubMed:23239027). Interacts with TJP2/ZO2 (By similarity).</text>
</comment>
<comment type="interaction">
    <interactant intactId="EBI-2903088">
        <id>Q16625</id>
    </interactant>
    <interactant intactId="EBI-3939278">
        <id>Q9BXN2</id>
        <label>CLEC7A</label>
    </interactant>
    <organismsDiffer>false</organismsDiffer>
    <experiments>3</experiments>
</comment>
<comment type="interaction">
    <interactant intactId="EBI-2903088">
        <id>Q16625</id>
    </interactant>
    <interactant intactId="EBI-749343">
        <id>P49674</id>
        <label>CSNK1E</label>
    </interactant>
    <organismsDiffer>false</organismsDiffer>
    <experiments>10</experiments>
</comment>
<comment type="interaction">
    <interactant intactId="EBI-2903088">
        <id>Q16625</id>
    </interactant>
    <interactant intactId="EBI-10968534">
        <id>P50570-2</id>
        <label>DNM2</label>
    </interactant>
    <organismsDiffer>false</organismsDiffer>
    <experiments>3</experiments>
</comment>
<comment type="interaction">
    <interactant intactId="EBI-2903088">
        <id>Q16625</id>
    </interactant>
    <interactant intactId="EBI-11721746">
        <id>Q8TED1</id>
        <label>GPX8</label>
    </interactant>
    <organismsDiffer>false</organismsDiffer>
    <experiments>3</experiments>
</comment>
<comment type="interaction">
    <interactant intactId="EBI-2903088">
        <id>Q16625</id>
    </interactant>
    <interactant intactId="EBI-713665">
        <id>P19404</id>
        <label>NDUFV2</label>
    </interactant>
    <organismsDiffer>false</organismsDiffer>
    <experiments>3</experiments>
</comment>
<comment type="interaction">
    <interactant intactId="EBI-2903088">
        <id>Q16625</id>
    </interactant>
    <interactant intactId="EBI-740019">
        <id>O15162</id>
        <label>PLSCR1</label>
    </interactant>
    <organismsDiffer>false</organismsDiffer>
    <experiments>2</experiments>
</comment>
<comment type="interaction">
    <interactant intactId="EBI-2903088">
        <id>Q16625</id>
    </interactant>
    <interactant intactId="EBI-7131783">
        <id>Q8N205</id>
        <label>SYNE4</label>
    </interactant>
    <organismsDiffer>false</organismsDiffer>
    <experiments>4</experiments>
</comment>
<comment type="interaction">
    <interactant intactId="EBI-16115673">
        <id>Q16625-1</id>
    </interactant>
    <interactant intactId="EBI-2865850">
        <id>P24723</id>
        <label>PRKCH</label>
    </interactant>
    <organismsDiffer>false</organismsDiffer>
    <experiments>2</experiments>
</comment>
<comment type="subcellular location">
    <subcellularLocation>
        <location evidence="8 9 20">Cell membrane</location>
        <topology evidence="3">Multi-pass membrane protein</topology>
    </subcellularLocation>
    <subcellularLocation>
        <location evidence="7 8 9 12 16 19 20">Cell junction</location>
        <location evidence="7 8 9 12 16 19 20">Tight junction</location>
    </subcellularLocation>
</comment>
<comment type="alternative products">
    <event type="alternative splicing"/>
    <isoform>
        <id>Q16625-1</id>
        <name>1</name>
        <name>WT-OCLN</name>
        <name>TM4(+)</name>
        <sequence type="displayed"/>
    </isoform>
    <isoform>
        <id>Q16625-2</id>
        <name>2</name>
        <name>OCLN-ex4del</name>
        <name>TM4(-)</name>
        <sequence type="described" ref="VSP_043877"/>
    </isoform>
    <isoform>
        <id>Q16625-3</id>
        <name>3</name>
        <name>OCLN-ex7ext</name>
        <sequence type="described" ref="VSP_043879"/>
    </isoform>
    <isoform>
        <id>Q16625-4</id>
        <name>4</name>
        <name>OCLN-ex3del</name>
        <name>OCLN-ex3pdel</name>
        <sequence type="described" ref="VSP_043872"/>
    </isoform>
    <isoform>
        <id>Q16625-5</id>
        <name>5</name>
        <name>OCLN-ex3-4del</name>
        <sequence type="described" ref="VSP_043872 VSP_043878"/>
    </isoform>
    <isoform>
        <id>Q16625-6</id>
        <name>6</name>
        <name>OCLN-ex3p-9pdel</name>
        <sequence type="described" ref="VSP_043873 VSP_043875 VSP_043876"/>
    </isoform>
    <isoform>
        <id>Q16625-7</id>
        <name>7</name>
        <name>OCLN-ex3p-7pdel</name>
        <sequence type="described" ref="VSP_043874 VSP_043876"/>
    </isoform>
</comment>
<comment type="tissue specificity">
    <text evidence="16">Localized at tight junctions of both epithelial and endothelial cells. Highly expressed in kidney. Not detected in testis.</text>
</comment>
<comment type="domain">
    <text evidence="1 20">The C-terminal is cytoplasmic and is important for interaction with ZO-1. Sufficient for the tight junction localization. Involved in the regulation of the permeability barrier function of the tight junction (By similarity). The first extracellular loop participates in an adhesive interaction.</text>
</comment>
<comment type="PTM">
    <text evidence="8 9 10 12">Dephosphorylated by PTPRJ. The tyrosine phosphorylation on Tyr-398 and Tyr-402 reduces its ability to interact with TJP1. Phosphorylation at Ser-490 also attenuates the interaction with TJP1.</text>
</comment>
<comment type="PTM">
    <text evidence="17">(Microbial infection) Cleaved by S.pyogenes SpeB protease; leading to its degradation (PubMed:23532847). Degradation by SpeB promotes bacterial translocation across the host epithelial barrier (PubMed:23532847).</text>
</comment>
<comment type="disease" evidence="14">
    <disease id="DI-02925">
        <name>Pseudo-TORCH syndrome 1</name>
        <acronym>PTORCH1</acronym>
        <description>An autosomal recessive neurologic disorder with characteristic clinical and neuroradiologic features that mimic intrauterine TORCH infection in the absence of evidence of infection. Affected individuals have congenital microcephaly, intracranial calcifications, and severe developmental delay.</description>
        <dbReference type="MIM" id="251290"/>
    </disease>
    <text>The disease is caused by variants affecting the gene represented in this entry.</text>
</comment>
<comment type="similarity">
    <text evidence="22">Belongs to the ELL/occludin family.</text>
</comment>
<comment type="online information" name="Wikipedia">
    <link uri="https://en.wikipedia.org/wiki/Occludin"/>
    <text>Occludin entry</text>
</comment>
<accession>Q16625</accession>
<accession>B5BU70</accession>
<accession>D2DU64</accession>
<accession>D2DU65</accession>
<accession>D2IGC0</accession>
<accession>D2IGC1</accession>
<accession>E2CYV9</accession>
<accession>Q5U1V4</accession>
<accession>Q8N6K1</accession>
<dbReference type="EMBL" id="U49184">
    <property type="protein sequence ID" value="AAC50451.1"/>
    <property type="molecule type" value="mRNA"/>
</dbReference>
<dbReference type="EMBL" id="U53823">
    <property type="protein sequence ID" value="AAB00195.1"/>
    <property type="molecule type" value="mRNA"/>
</dbReference>
<dbReference type="EMBL" id="FJ786083">
    <property type="protein sequence ID" value="ACT53743.1"/>
    <property type="molecule type" value="mRNA"/>
</dbReference>
<dbReference type="EMBL" id="FJ786084">
    <property type="protein sequence ID" value="ACT53744.1"/>
    <property type="molecule type" value="mRNA"/>
</dbReference>
<dbReference type="EMBL" id="AF400630">
    <property type="protein sequence ID" value="AAL47094.1"/>
    <property type="molecule type" value="Genomic_DNA"/>
</dbReference>
<dbReference type="EMBL" id="AF400623">
    <property type="protein sequence ID" value="AAL47094.1"/>
    <property type="status" value="JOINED"/>
    <property type="molecule type" value="Genomic_DNA"/>
</dbReference>
<dbReference type="EMBL" id="AF400624">
    <property type="protein sequence ID" value="AAL47094.1"/>
    <property type="status" value="JOINED"/>
    <property type="molecule type" value="Genomic_DNA"/>
</dbReference>
<dbReference type="EMBL" id="AF400625">
    <property type="protein sequence ID" value="AAL47094.1"/>
    <property type="status" value="JOINED"/>
    <property type="molecule type" value="Genomic_DNA"/>
</dbReference>
<dbReference type="EMBL" id="AF400626">
    <property type="protein sequence ID" value="AAL47094.1"/>
    <property type="status" value="JOINED"/>
    <property type="molecule type" value="Genomic_DNA"/>
</dbReference>
<dbReference type="EMBL" id="AF400627">
    <property type="protein sequence ID" value="AAL47094.1"/>
    <property type="status" value="JOINED"/>
    <property type="molecule type" value="Genomic_DNA"/>
</dbReference>
<dbReference type="EMBL" id="AF400628">
    <property type="protein sequence ID" value="AAL47094.1"/>
    <property type="status" value="JOINED"/>
    <property type="molecule type" value="Genomic_DNA"/>
</dbReference>
<dbReference type="EMBL" id="AF400629">
    <property type="protein sequence ID" value="AAL47094.1"/>
    <property type="status" value="JOINED"/>
    <property type="molecule type" value="Genomic_DNA"/>
</dbReference>
<dbReference type="EMBL" id="GQ225096">
    <property type="protein sequence ID" value="ACT83431.1"/>
    <property type="molecule type" value="mRNA"/>
</dbReference>
<dbReference type="EMBL" id="GQ225097">
    <property type="protein sequence ID" value="ACT83432.1"/>
    <property type="molecule type" value="mRNA"/>
</dbReference>
<dbReference type="EMBL" id="GQ225098">
    <property type="protein sequence ID" value="ACT83433.1"/>
    <property type="molecule type" value="mRNA"/>
</dbReference>
<dbReference type="EMBL" id="GQ402517">
    <property type="protein sequence ID" value="ACZ80515.1"/>
    <property type="molecule type" value="mRNA"/>
</dbReference>
<dbReference type="EMBL" id="AB451306">
    <property type="protein sequence ID" value="BAG70120.1"/>
    <property type="molecule type" value="mRNA"/>
</dbReference>
<dbReference type="EMBL" id="AB451437">
    <property type="protein sequence ID" value="BAG70251.1"/>
    <property type="molecule type" value="mRNA"/>
</dbReference>
<dbReference type="EMBL" id="AC145146">
    <property type="status" value="NOT_ANNOTATED_CDS"/>
    <property type="molecule type" value="Genomic_DNA"/>
</dbReference>
<dbReference type="EMBL" id="AC147575">
    <property type="status" value="NOT_ANNOTATED_CDS"/>
    <property type="molecule type" value="Genomic_DNA"/>
</dbReference>
<dbReference type="EMBL" id="BC029886">
    <property type="protein sequence ID" value="AAH29886.1"/>
    <property type="molecule type" value="mRNA"/>
</dbReference>
<dbReference type="EMBL" id="BK001650">
    <property type="protein sequence ID" value="DAA01837.1"/>
    <property type="molecule type" value="mRNA"/>
</dbReference>
<dbReference type="CCDS" id="CCDS4006.1">
    <molecule id="Q16625-1"/>
</dbReference>
<dbReference type="CCDS" id="CCDS54864.1">
    <molecule id="Q16625-4"/>
</dbReference>
<dbReference type="CCDS" id="CCDS93725.1">
    <molecule id="Q16625-2"/>
</dbReference>
<dbReference type="PIR" id="G02533">
    <property type="entry name" value="G02533"/>
</dbReference>
<dbReference type="RefSeq" id="NP_001192183.1">
    <molecule id="Q16625-1"/>
    <property type="nucleotide sequence ID" value="NM_001205254.2"/>
</dbReference>
<dbReference type="RefSeq" id="NP_001192184.1">
    <molecule id="Q16625-4"/>
    <property type="nucleotide sequence ID" value="NM_001205255.1"/>
</dbReference>
<dbReference type="RefSeq" id="NP_001397672.1">
    <molecule id="Q16625-2"/>
    <property type="nucleotide sequence ID" value="NM_001410743.1"/>
</dbReference>
<dbReference type="RefSeq" id="NP_002529.1">
    <molecule id="Q16625-1"/>
    <property type="nucleotide sequence ID" value="NM_002538.4"/>
</dbReference>
<dbReference type="RefSeq" id="XP_016864402.1">
    <molecule id="Q16625-2"/>
    <property type="nucleotide sequence ID" value="XM_017008913.3"/>
</dbReference>
<dbReference type="RefSeq" id="XP_016864403.1">
    <property type="nucleotide sequence ID" value="XM_017008914.1"/>
</dbReference>
<dbReference type="RefSeq" id="XP_047272549.1">
    <molecule id="Q16625-1"/>
    <property type="nucleotide sequence ID" value="XM_047416593.1"/>
</dbReference>
<dbReference type="RefSeq" id="XP_047272550.1">
    <molecule id="Q16625-1"/>
    <property type="nucleotide sequence ID" value="XM_047416594.1"/>
</dbReference>
<dbReference type="RefSeq" id="XP_054188984.1">
    <molecule id="Q16625-1"/>
    <property type="nucleotide sequence ID" value="XM_054333009.1"/>
</dbReference>
<dbReference type="RefSeq" id="XP_054188985.1">
    <molecule id="Q16625-1"/>
    <property type="nucleotide sequence ID" value="XM_054333010.1"/>
</dbReference>
<dbReference type="RefSeq" id="XP_054188986.1">
    <molecule id="Q16625-2"/>
    <property type="nucleotide sequence ID" value="XM_054333011.1"/>
</dbReference>
<dbReference type="RefSeq" id="XP_054207355.1">
    <molecule id="Q16625-1"/>
    <property type="nucleotide sequence ID" value="XM_054351380.1"/>
</dbReference>
<dbReference type="RefSeq" id="XP_054207356.1">
    <molecule id="Q16625-1"/>
    <property type="nucleotide sequence ID" value="XM_054351381.1"/>
</dbReference>
<dbReference type="RefSeq" id="XP_054207357.1">
    <molecule id="Q16625-2"/>
    <property type="nucleotide sequence ID" value="XM_054351382.1"/>
</dbReference>
<dbReference type="PDB" id="1WPA">
    <property type="method" value="X-ray"/>
    <property type="resolution" value="1.50 A"/>
    <property type="chains" value="A=413-522"/>
</dbReference>
<dbReference type="PDB" id="1XAW">
    <property type="method" value="X-ray"/>
    <property type="resolution" value="1.45 A"/>
    <property type="chains" value="A=383-522"/>
</dbReference>
<dbReference type="PDB" id="3G7C">
    <property type="method" value="X-ray"/>
    <property type="resolution" value="2.00 A"/>
    <property type="chains" value="A=416-522"/>
</dbReference>
<dbReference type="PDBsum" id="1WPA"/>
<dbReference type="PDBsum" id="1XAW"/>
<dbReference type="PDBsum" id="3G7C"/>
<dbReference type="SMR" id="Q16625"/>
<dbReference type="BioGRID" id="111004">
    <property type="interactions" value="527"/>
</dbReference>
<dbReference type="CORUM" id="Q16625"/>
<dbReference type="DIP" id="DIP-42791N"/>
<dbReference type="FunCoup" id="Q16625">
    <property type="interactions" value="861"/>
</dbReference>
<dbReference type="IntAct" id="Q16625">
    <property type="interactions" value="96"/>
</dbReference>
<dbReference type="MINT" id="Q16625"/>
<dbReference type="STRING" id="9606.ENSP00000347379"/>
<dbReference type="TCDB" id="9.B.41.1.1">
    <property type="family name" value="the occludin (occludin) family"/>
</dbReference>
<dbReference type="GlyGen" id="Q16625">
    <property type="glycosylation" value="10 sites, 1 N-linked glycan (1 site)"/>
</dbReference>
<dbReference type="iPTMnet" id="Q16625"/>
<dbReference type="PhosphoSitePlus" id="Q16625"/>
<dbReference type="SwissPalm" id="Q16625"/>
<dbReference type="BioMuta" id="OCLN"/>
<dbReference type="DMDM" id="3914196"/>
<dbReference type="jPOST" id="Q16625"/>
<dbReference type="MassIVE" id="Q16625"/>
<dbReference type="PaxDb" id="9606-ENSP00000347379"/>
<dbReference type="PeptideAtlas" id="Q16625"/>
<dbReference type="ProteomicsDB" id="60966">
    <molecule id="Q16625-1"/>
</dbReference>
<dbReference type="ProteomicsDB" id="60967">
    <molecule id="Q16625-2"/>
</dbReference>
<dbReference type="ProteomicsDB" id="60968">
    <molecule id="Q16625-3"/>
</dbReference>
<dbReference type="ProteomicsDB" id="60969">
    <molecule id="Q16625-4"/>
</dbReference>
<dbReference type="ProteomicsDB" id="60970">
    <molecule id="Q16625-5"/>
</dbReference>
<dbReference type="ProteomicsDB" id="60971">
    <molecule id="Q16625-6"/>
</dbReference>
<dbReference type="ProteomicsDB" id="60972">
    <molecule id="Q16625-7"/>
</dbReference>
<dbReference type="Pumba" id="Q16625"/>
<dbReference type="TopDownProteomics" id="Q16625-3">
    <molecule id="Q16625-3"/>
</dbReference>
<dbReference type="TopDownProteomics" id="Q16625-6">
    <molecule id="Q16625-6"/>
</dbReference>
<dbReference type="Antibodypedia" id="782">
    <property type="antibodies" value="556 antibodies from 40 providers"/>
</dbReference>
<dbReference type="DNASU" id="100506658"/>
<dbReference type="Ensembl" id="ENST00000355237.6">
    <molecule id="Q16625-1"/>
    <property type="protein sequence ID" value="ENSP00000347379.2"/>
    <property type="gene ID" value="ENSG00000197822.12"/>
</dbReference>
<dbReference type="Ensembl" id="ENST00000396442.7">
    <molecule id="Q16625-1"/>
    <property type="protein sequence ID" value="ENSP00000379719.2"/>
    <property type="gene ID" value="ENSG00000197822.12"/>
</dbReference>
<dbReference type="Ensembl" id="ENST00000538151.2">
    <molecule id="Q16625-4"/>
    <property type="protein sequence ID" value="ENSP00000445940.1"/>
    <property type="gene ID" value="ENSG00000197822.12"/>
</dbReference>
<dbReference type="Ensembl" id="ENST00000680027.1">
    <molecule id="Q16625-1"/>
    <property type="protein sequence ID" value="ENSP00000506162.1"/>
    <property type="gene ID" value="ENSG00000197822.12"/>
</dbReference>
<dbReference type="Ensembl" id="ENST00000680496.1">
    <molecule id="Q16625-2"/>
    <property type="protein sequence ID" value="ENSP00000504966.1"/>
    <property type="gene ID" value="ENSG00000197822.12"/>
</dbReference>
<dbReference type="Ensembl" id="ENST00000680784.1">
    <molecule id="Q16625-2"/>
    <property type="protein sequence ID" value="ENSP00000506305.1"/>
    <property type="gene ID" value="ENSG00000197822.12"/>
</dbReference>
<dbReference type="Ensembl" id="ENST00000681041.1">
    <molecule id="Q16625-1"/>
    <property type="protein sequence ID" value="ENSP00000505426.1"/>
    <property type="gene ID" value="ENSG00000197822.12"/>
</dbReference>
<dbReference type="Ensembl" id="ENST00000681586.1">
    <molecule id="Q16625-1"/>
    <property type="protein sequence ID" value="ENSP00000505541.1"/>
    <property type="gene ID" value="ENSG00000197822.12"/>
</dbReference>
<dbReference type="GeneID" id="100506658"/>
<dbReference type="KEGG" id="hsa:100506658"/>
<dbReference type="MANE-Select" id="ENST00000396442.7">
    <property type="protein sequence ID" value="ENSP00000379719.2"/>
    <property type="RefSeq nucleotide sequence ID" value="NM_001205254.2"/>
    <property type="RefSeq protein sequence ID" value="NP_001192183.1"/>
</dbReference>
<dbReference type="UCSC" id="uc003jwu.3">
    <molecule id="Q16625-1"/>
    <property type="organism name" value="human"/>
</dbReference>
<dbReference type="AGR" id="HGNC:8104"/>
<dbReference type="CTD" id="100506658"/>
<dbReference type="DisGeNET" id="100506658"/>
<dbReference type="GeneCards" id="OCLN"/>
<dbReference type="HGNC" id="HGNC:8104">
    <property type="gene designation" value="OCLN"/>
</dbReference>
<dbReference type="HPA" id="ENSG00000197822">
    <property type="expression patterns" value="Tissue enhanced (thyroid)"/>
</dbReference>
<dbReference type="MalaCards" id="OCLN"/>
<dbReference type="MIM" id="251290">
    <property type="type" value="phenotype"/>
</dbReference>
<dbReference type="MIM" id="602876">
    <property type="type" value="gene"/>
</dbReference>
<dbReference type="neXtProt" id="NX_Q16625"/>
<dbReference type="OpenTargets" id="ENSG00000197822"/>
<dbReference type="Orphanet" id="1229">
    <property type="disease" value="Congenital intrauterine infection-like syndrome"/>
</dbReference>
<dbReference type="PharmGKB" id="PA31893"/>
<dbReference type="VEuPathDB" id="HostDB:ENSG00000197822"/>
<dbReference type="eggNOG" id="ENOG502QS9F">
    <property type="taxonomic scope" value="Eukaryota"/>
</dbReference>
<dbReference type="GeneTree" id="ENSGT00730000110989"/>
<dbReference type="HOGENOM" id="CLU_039628_1_0_1"/>
<dbReference type="InParanoid" id="Q16625"/>
<dbReference type="OMA" id="QIYMLCS"/>
<dbReference type="OrthoDB" id="8867927at2759"/>
<dbReference type="PAN-GO" id="Q16625">
    <property type="GO annotations" value="4 GO annotations based on evolutionary models"/>
</dbReference>
<dbReference type="PhylomeDB" id="Q16625"/>
<dbReference type="TreeFam" id="TF326161"/>
<dbReference type="PathwayCommons" id="Q16625"/>
<dbReference type="Reactome" id="R-HSA-351906">
    <property type="pathway name" value="Apoptotic cleavage of cell adhesion proteins"/>
</dbReference>
<dbReference type="Reactome" id="R-HSA-8935964">
    <property type="pathway name" value="RUNX1 regulates expression of components of tight junctions"/>
</dbReference>
<dbReference type="SignaLink" id="Q16625"/>
<dbReference type="SIGNOR" id="Q16625"/>
<dbReference type="BioGRID-ORCS" id="100506658">
    <property type="hits" value="13 hits in 1139 CRISPR screens"/>
</dbReference>
<dbReference type="ChiTaRS" id="OCLN">
    <property type="organism name" value="human"/>
</dbReference>
<dbReference type="EvolutionaryTrace" id="Q16625"/>
<dbReference type="GeneWiki" id="Occludin"/>
<dbReference type="GenomeRNAi" id="100506658"/>
<dbReference type="Pharos" id="Q16625">
    <property type="development level" value="Tbio"/>
</dbReference>
<dbReference type="PRO" id="PR:Q16625"/>
<dbReference type="Proteomes" id="UP000005640">
    <property type="component" value="Chromosome 5"/>
</dbReference>
<dbReference type="RNAct" id="Q16625">
    <property type="molecule type" value="protein"/>
</dbReference>
<dbReference type="Bgee" id="ENSG00000197822">
    <property type="expression patterns" value="Expressed in islet of Langerhans and 128 other cell types or tissues"/>
</dbReference>
<dbReference type="GO" id="GO:0016324">
    <property type="term" value="C:apical plasma membrane"/>
    <property type="evidence" value="ECO:0000318"/>
    <property type="project" value="GO_Central"/>
</dbReference>
<dbReference type="GO" id="GO:0016327">
    <property type="term" value="C:apicolateral plasma membrane"/>
    <property type="evidence" value="ECO:0007669"/>
    <property type="project" value="Ensembl"/>
</dbReference>
<dbReference type="GO" id="GO:0005923">
    <property type="term" value="C:bicellular tight junction"/>
    <property type="evidence" value="ECO:0000314"/>
    <property type="project" value="BHF-UCL"/>
</dbReference>
<dbReference type="GO" id="GO:0030054">
    <property type="term" value="C:cell junction"/>
    <property type="evidence" value="ECO:0000314"/>
    <property type="project" value="HPA"/>
</dbReference>
<dbReference type="GO" id="GO:0031252">
    <property type="term" value="C:cell leading edge"/>
    <property type="evidence" value="ECO:0000250"/>
    <property type="project" value="ARUK-UCL"/>
</dbReference>
<dbReference type="GO" id="GO:0005911">
    <property type="term" value="C:cell-cell junction"/>
    <property type="evidence" value="ECO:0000314"/>
    <property type="project" value="UniProtKB"/>
</dbReference>
<dbReference type="GO" id="GO:0031410">
    <property type="term" value="C:cytoplasmic vesicle"/>
    <property type="evidence" value="ECO:0000314"/>
    <property type="project" value="UniProtKB"/>
</dbReference>
<dbReference type="GO" id="GO:0030139">
    <property type="term" value="C:endocytic vesicle"/>
    <property type="evidence" value="ECO:0007669"/>
    <property type="project" value="Ensembl"/>
</dbReference>
<dbReference type="GO" id="GO:0005765">
    <property type="term" value="C:lysosomal membrane"/>
    <property type="evidence" value="ECO:0000314"/>
    <property type="project" value="ARUK-UCL"/>
</dbReference>
<dbReference type="GO" id="GO:0005886">
    <property type="term" value="C:plasma membrane"/>
    <property type="evidence" value="ECO:0000314"/>
    <property type="project" value="ARUK-UCL"/>
</dbReference>
<dbReference type="GO" id="GO:0032991">
    <property type="term" value="C:protein-containing complex"/>
    <property type="evidence" value="ECO:0000314"/>
    <property type="project" value="ARUK-UCL"/>
</dbReference>
<dbReference type="GO" id="GO:0070160">
    <property type="term" value="C:tight junction"/>
    <property type="evidence" value="ECO:0000314"/>
    <property type="project" value="ARUK-UCL"/>
</dbReference>
<dbReference type="GO" id="GO:0019904">
    <property type="term" value="F:protein domain specific binding"/>
    <property type="evidence" value="ECO:0000353"/>
    <property type="project" value="UniProtKB"/>
</dbReference>
<dbReference type="GO" id="GO:0070830">
    <property type="term" value="P:bicellular tight junction assembly"/>
    <property type="evidence" value="ECO:0000315"/>
    <property type="project" value="UniProtKB"/>
</dbReference>
<dbReference type="GO" id="GO:0045216">
    <property type="term" value="P:cell-cell junction organization"/>
    <property type="evidence" value="ECO:0000315"/>
    <property type="project" value="MGI"/>
</dbReference>
<dbReference type="GO" id="GO:0010631">
    <property type="term" value="P:epithelial cell migration"/>
    <property type="evidence" value="ECO:0000250"/>
    <property type="project" value="ARUK-UCL"/>
</dbReference>
<dbReference type="GO" id="GO:0035633">
    <property type="term" value="P:maintenance of blood-brain barrier"/>
    <property type="evidence" value="ECO:0000303"/>
    <property type="project" value="ARUK-UCL"/>
</dbReference>
<dbReference type="GO" id="GO:0010629">
    <property type="term" value="P:negative regulation of gene expression"/>
    <property type="evidence" value="ECO:0000315"/>
    <property type="project" value="ARUK-UCL"/>
</dbReference>
<dbReference type="GO" id="GO:1905605">
    <property type="term" value="P:positive regulation of blood-brain barrier permeability"/>
    <property type="evidence" value="ECO:0000315"/>
    <property type="project" value="ARUK-UCL"/>
</dbReference>
<dbReference type="GO" id="GO:0046326">
    <property type="term" value="P:positive regulation of D-glucose import"/>
    <property type="evidence" value="ECO:0000315"/>
    <property type="project" value="ARUK-UCL"/>
</dbReference>
<dbReference type="GO" id="GO:0010628">
    <property type="term" value="P:positive regulation of gene expression"/>
    <property type="evidence" value="ECO:0000315"/>
    <property type="project" value="ARUK-UCL"/>
</dbReference>
<dbReference type="GO" id="GO:0010592">
    <property type="term" value="P:positive regulation of lamellipodium assembly"/>
    <property type="evidence" value="ECO:0000250"/>
    <property type="project" value="ARUK-UCL"/>
</dbReference>
<dbReference type="GO" id="GO:0031116">
    <property type="term" value="P:positive regulation of microtubule polymerization"/>
    <property type="evidence" value="ECO:0000250"/>
    <property type="project" value="ARUK-UCL"/>
</dbReference>
<dbReference type="GO" id="GO:0090303">
    <property type="term" value="P:positive regulation of wound healing"/>
    <property type="evidence" value="ECO:0000250"/>
    <property type="project" value="ARUK-UCL"/>
</dbReference>
<dbReference type="GO" id="GO:1902463">
    <property type="term" value="P:protein localization to cell leading edge"/>
    <property type="evidence" value="ECO:0000250"/>
    <property type="project" value="ARUK-UCL"/>
</dbReference>
<dbReference type="GO" id="GO:0065003">
    <property type="term" value="P:protein-containing complex assembly"/>
    <property type="evidence" value="ECO:0000304"/>
    <property type="project" value="ProtInc"/>
</dbReference>
<dbReference type="GO" id="GO:0010827">
    <property type="term" value="P:regulation of D-glucose transmembrane transport"/>
    <property type="evidence" value="ECO:0000315"/>
    <property type="project" value="ARUK-UCL"/>
</dbReference>
<dbReference type="Gene3D" id="6.10.140.340">
    <property type="match status" value="1"/>
</dbReference>
<dbReference type="InterPro" id="IPR031176">
    <property type="entry name" value="ELL/occludin"/>
</dbReference>
<dbReference type="InterPro" id="IPR008253">
    <property type="entry name" value="Marvel"/>
</dbReference>
<dbReference type="InterPro" id="IPR036259">
    <property type="entry name" value="MFS_trans_sf"/>
</dbReference>
<dbReference type="InterPro" id="IPR002958">
    <property type="entry name" value="Occludin"/>
</dbReference>
<dbReference type="InterPro" id="IPR010844">
    <property type="entry name" value="Occludin_ELL"/>
</dbReference>
<dbReference type="PANTHER" id="PTHR23288:SF4">
    <property type="entry name" value="OCCLUDIN"/>
    <property type="match status" value="1"/>
</dbReference>
<dbReference type="PANTHER" id="PTHR23288">
    <property type="entry name" value="OCCLUDIN AND RNA POLYMERASE II ELONGATION FACTOR ELL"/>
    <property type="match status" value="1"/>
</dbReference>
<dbReference type="Pfam" id="PF01284">
    <property type="entry name" value="MARVEL"/>
    <property type="match status" value="1"/>
</dbReference>
<dbReference type="Pfam" id="PF07303">
    <property type="entry name" value="Occludin_ELL"/>
    <property type="match status" value="1"/>
</dbReference>
<dbReference type="PIRSF" id="PIRSF005993">
    <property type="entry name" value="Occludin"/>
    <property type="match status" value="1"/>
</dbReference>
<dbReference type="PRINTS" id="PR01258">
    <property type="entry name" value="OCCLUDIN"/>
</dbReference>
<dbReference type="SUPFAM" id="SSF103473">
    <property type="entry name" value="MFS general substrate transporter"/>
    <property type="match status" value="1"/>
</dbReference>
<dbReference type="SUPFAM" id="SSF144292">
    <property type="entry name" value="occludin/ELL-like"/>
    <property type="match status" value="1"/>
</dbReference>
<dbReference type="PROSITE" id="PS51225">
    <property type="entry name" value="MARVEL"/>
    <property type="match status" value="1"/>
</dbReference>
<dbReference type="PROSITE" id="PS51980">
    <property type="entry name" value="OCEL"/>
    <property type="match status" value="1"/>
</dbReference>
<keyword id="KW-0002">3D-structure</keyword>
<keyword id="KW-0025">Alternative splicing</keyword>
<keyword id="KW-0965">Cell junction</keyword>
<keyword id="KW-1003">Cell membrane</keyword>
<keyword id="KW-0175">Coiled coil</keyword>
<keyword id="KW-0225">Disease variant</keyword>
<keyword id="KW-1015">Disulfide bond</keyword>
<keyword id="KW-0472">Membrane</keyword>
<keyword id="KW-0597">Phosphoprotein</keyword>
<keyword id="KW-1267">Proteomics identification</keyword>
<keyword id="KW-1185">Reference proteome</keyword>
<keyword id="KW-0796">Tight junction</keyword>
<keyword id="KW-0812">Transmembrane</keyword>
<keyword id="KW-1133">Transmembrane helix</keyword>
<protein>
    <recommendedName>
        <fullName>Occludin</fullName>
    </recommendedName>
</protein>
<organism>
    <name type="scientific">Homo sapiens</name>
    <name type="common">Human</name>
    <dbReference type="NCBI Taxonomy" id="9606"/>
    <lineage>
        <taxon>Eukaryota</taxon>
        <taxon>Metazoa</taxon>
        <taxon>Chordata</taxon>
        <taxon>Craniata</taxon>
        <taxon>Vertebrata</taxon>
        <taxon>Euteleostomi</taxon>
        <taxon>Mammalia</taxon>
        <taxon>Eutheria</taxon>
        <taxon>Euarchontoglires</taxon>
        <taxon>Primates</taxon>
        <taxon>Haplorrhini</taxon>
        <taxon>Catarrhini</taxon>
        <taxon>Hominidae</taxon>
        <taxon>Homo</taxon>
    </lineage>
</organism>
<sequence>MSSRPLESPPPYRPDEFKPNHYAPSNDIYGGEMHVRPMLSQPAYSFYPEDEILHFYKWTSPPGVIRILSMLIIVMCIAIFACVASTLAWDRGYGTSLLGGSVGYPYGGSGFGSYGSGYGYGYGYGYGYGGYTDPRAAKGFMLAMAAFCFIAALVIFVTSVIRSEMSRTRRYYLSVIIVSAILGIMVFIATIVYIMGVNPTAQSSGSLYGSQIYALCNQFYTPAATGLYVDQYLYHYCVVDPQEAIAIVLGFMIIVAFALIIFFAVKTRRKMDRYDKSNILWDKEHIYDEQPPNVEEWVKNVSAGTQDVPSPPSDYVERVDSPMAYSSNGKVNDKRFYPESSYKSTPVPEVVQELPLTSPVDDFRQPRYSSGGNFETPSKRAPAKGRAGRSKRTEQDHYETDYTTGGESCDELEEDWIREYPPITSDQQRQLYKRNFDTGLQEYKSLQSELDEINKELSRLDKELDDYREESEEYMAAADEYNRLKQVKGSADYKSKKNHCKQLKSKLSHIKKMVGDYDRQKT</sequence>
<reference key="1">
    <citation type="journal article" date="1996" name="J. Cell Biol.">
        <title>Interspecies diversity of the occludin sequence: cDNA cloning of human, mouse, dog, and rat-kangaroo homologues.</title>
        <authorList>
            <person name="Ando-Akatsuka Y."/>
            <person name="Saitou M."/>
            <person name="Hirase T."/>
            <person name="Kishi M."/>
            <person name="Sakakibara A."/>
            <person name="Itoh M."/>
            <person name="Yonemura S."/>
            <person name="Furuse M."/>
            <person name="Tsukita S."/>
        </authorList>
    </citation>
    <scope>NUCLEOTIDE SEQUENCE [MRNA] (ISOFORM 1)</scope>
    <source>
        <tissue>Colon carcinoma</tissue>
    </source>
</reference>
<reference key="2">
    <citation type="journal article" date="1997" name="J. Cell Sci.">
        <title>Occludin confers adhesiveness when expressed in fibroblasts.</title>
        <authorList>
            <person name="Van Itallie C.M."/>
            <person name="Anderson J.M."/>
        </authorList>
    </citation>
    <scope>NUCLEOTIDE SEQUENCE [MRNA] (ISOFORM 1)</scope>
    <scope>DOMAIN</scope>
    <scope>SUBCELLULAR LOCATION</scope>
    <scope>TOPOLOGY</scope>
    <source>
        <tissue>Liver</tissue>
    </source>
</reference>
<reference key="3">
    <citation type="journal article" date="2010" name="J. Virol.">
        <title>Splicing diversity of the human OCLN gene and its biological significance for hepatitis C virus entry.</title>
        <authorList>
            <person name="Kohaar I."/>
            <person name="Ploss A."/>
            <person name="Korol E."/>
            <person name="Mu K."/>
            <person name="Schoggins J.W."/>
            <person name="O'Brien T.R."/>
            <person name="Rice C.M."/>
            <person name="Prokunina-Olsson L."/>
        </authorList>
    </citation>
    <scope>NUCLEOTIDE SEQUENCE [MRNA] (ISOFORMS 3; 4; 5; 6 AND 7)</scope>
    <scope>ALTERNATIVE SPLICING</scope>
    <source>
        <tissue>Liver</tissue>
    </source>
</reference>
<reference key="4">
    <citation type="submission" date="2001-07" db="EMBL/GenBank/DDBJ databases">
        <title>Genomic structure of occludin gene.</title>
        <authorList>
            <person name="Fukasawa M."/>
            <person name="Toyota T."/>
            <person name="Yoshitsugu K."/>
            <person name="Yoshikawa T."/>
        </authorList>
    </citation>
    <scope>NUCLEOTIDE SEQUENCE [GENOMIC DNA]</scope>
</reference>
<reference key="5">
    <citation type="journal article" date="2008" name="Nat. Methods">
        <title>Human protein factory for converting the transcriptome into an in vitro-expressed proteome.</title>
        <authorList>
            <person name="Goshima N."/>
            <person name="Kawamura Y."/>
            <person name="Fukumoto A."/>
            <person name="Miura A."/>
            <person name="Honma R."/>
            <person name="Satoh R."/>
            <person name="Wakamatsu A."/>
            <person name="Yamamoto J."/>
            <person name="Kimura K."/>
            <person name="Nishikawa T."/>
            <person name="Andoh T."/>
            <person name="Iida Y."/>
            <person name="Ishikawa K."/>
            <person name="Ito E."/>
            <person name="Kagawa N."/>
            <person name="Kaminaga C."/>
            <person name="Kanehori K."/>
            <person name="Kawakami B."/>
            <person name="Kenmochi K."/>
            <person name="Kimura R."/>
            <person name="Kobayashi M."/>
            <person name="Kuroita T."/>
            <person name="Kuwayama H."/>
            <person name="Maruyama Y."/>
            <person name="Matsuo K."/>
            <person name="Minami K."/>
            <person name="Mitsubori M."/>
            <person name="Mori M."/>
            <person name="Morishita R."/>
            <person name="Murase A."/>
            <person name="Nishikawa A."/>
            <person name="Nishikawa S."/>
            <person name="Okamoto T."/>
            <person name="Sakagami N."/>
            <person name="Sakamoto Y."/>
            <person name="Sasaki Y."/>
            <person name="Seki T."/>
            <person name="Sono S."/>
            <person name="Sugiyama A."/>
            <person name="Sumiya T."/>
            <person name="Takayama T."/>
            <person name="Takayama Y."/>
            <person name="Takeda H."/>
            <person name="Togashi T."/>
            <person name="Yahata K."/>
            <person name="Yamada H."/>
            <person name="Yanagisawa Y."/>
            <person name="Endo Y."/>
            <person name="Imamoto F."/>
            <person name="Kisu Y."/>
            <person name="Tanaka S."/>
            <person name="Isogai T."/>
            <person name="Imai J."/>
            <person name="Watanabe S."/>
            <person name="Nomura N."/>
        </authorList>
    </citation>
    <scope>NUCLEOTIDE SEQUENCE [LARGE SCALE MRNA] (ISOFORM 1)</scope>
</reference>
<reference key="6">
    <citation type="journal article" date="2004" name="Nature">
        <title>The DNA sequence and comparative analysis of human chromosome 5.</title>
        <authorList>
            <person name="Schmutz J."/>
            <person name="Martin J."/>
            <person name="Terry A."/>
            <person name="Couronne O."/>
            <person name="Grimwood J."/>
            <person name="Lowry S."/>
            <person name="Gordon L.A."/>
            <person name="Scott D."/>
            <person name="Xie G."/>
            <person name="Huang W."/>
            <person name="Hellsten U."/>
            <person name="Tran-Gyamfi M."/>
            <person name="She X."/>
            <person name="Prabhakar S."/>
            <person name="Aerts A."/>
            <person name="Altherr M."/>
            <person name="Bajorek E."/>
            <person name="Black S."/>
            <person name="Branscomb E."/>
            <person name="Caoile C."/>
            <person name="Challacombe J.F."/>
            <person name="Chan Y.M."/>
            <person name="Denys M."/>
            <person name="Detter J.C."/>
            <person name="Escobar J."/>
            <person name="Flowers D."/>
            <person name="Fotopulos D."/>
            <person name="Glavina T."/>
            <person name="Gomez M."/>
            <person name="Gonzales E."/>
            <person name="Goodstein D."/>
            <person name="Grigoriev I."/>
            <person name="Groza M."/>
            <person name="Hammon N."/>
            <person name="Hawkins T."/>
            <person name="Haydu L."/>
            <person name="Israni S."/>
            <person name="Jett J."/>
            <person name="Kadner K."/>
            <person name="Kimball H."/>
            <person name="Kobayashi A."/>
            <person name="Lopez F."/>
            <person name="Lou Y."/>
            <person name="Martinez D."/>
            <person name="Medina C."/>
            <person name="Morgan J."/>
            <person name="Nandkeshwar R."/>
            <person name="Noonan J.P."/>
            <person name="Pitluck S."/>
            <person name="Pollard M."/>
            <person name="Predki P."/>
            <person name="Priest J."/>
            <person name="Ramirez L."/>
            <person name="Retterer J."/>
            <person name="Rodriguez A."/>
            <person name="Rogers S."/>
            <person name="Salamov A."/>
            <person name="Salazar A."/>
            <person name="Thayer N."/>
            <person name="Tice H."/>
            <person name="Tsai M."/>
            <person name="Ustaszewska A."/>
            <person name="Vo N."/>
            <person name="Wheeler J."/>
            <person name="Wu K."/>
            <person name="Yang J."/>
            <person name="Dickson M."/>
            <person name="Cheng J.-F."/>
            <person name="Eichler E.E."/>
            <person name="Olsen A."/>
            <person name="Pennacchio L.A."/>
            <person name="Rokhsar D.S."/>
            <person name="Richardson P."/>
            <person name="Lucas S.M."/>
            <person name="Myers R.M."/>
            <person name="Rubin E.M."/>
        </authorList>
    </citation>
    <scope>NUCLEOTIDE SEQUENCE [LARGE SCALE GENOMIC DNA]</scope>
</reference>
<reference key="7">
    <citation type="journal article" date="2004" name="Genome Res.">
        <title>The status, quality, and expansion of the NIH full-length cDNA project: the Mammalian Gene Collection (MGC).</title>
        <authorList>
            <consortium name="The MGC Project Team"/>
        </authorList>
    </citation>
    <scope>NUCLEOTIDE SEQUENCE [LARGE SCALE MRNA] (ISOFORM 1)</scope>
    <source>
        <tissue>Brain</tissue>
        <tissue>Lung</tissue>
    </source>
</reference>
<reference key="8">
    <citation type="journal article" date="1999" name="J. Cell Sci.">
        <title>VAP-33 localizes to both an intracellular vesicle population and with occludin at the tight junction.</title>
        <authorList>
            <person name="Lapierre L.A."/>
            <person name="Tuma P.L."/>
            <person name="Navarre J."/>
            <person name="Goldenring J.R."/>
            <person name="Anderson J.M."/>
        </authorList>
    </citation>
    <scope>SUBCELLULAR LOCATION</scope>
    <scope>INTERACTION WITH VAPA</scope>
</reference>
<reference key="9">
    <citation type="journal article" date="2002" name="J. Cell Sci.">
        <title>Occludin TM4(-): an isoform of the tight junction protein present in primates lacking the fourth transmembrane domain.</title>
        <authorList>
            <person name="Ghassemifar M.R."/>
            <person name="Sheth B."/>
            <person name="Papenbrock T."/>
            <person name="Leese H.J."/>
            <person name="Houghton F.D."/>
            <person name="Fleming T.P."/>
        </authorList>
    </citation>
    <scope>ALTERNATIVE SPLICING (ISOFORM 2)</scope>
</reference>
<reference key="10">
    <citation type="journal article" date="2007" name="Science">
        <title>ATM and ATR substrate analysis reveals extensive protein networks responsive to DNA damage.</title>
        <authorList>
            <person name="Matsuoka S."/>
            <person name="Ballif B.A."/>
            <person name="Smogorzewska A."/>
            <person name="McDonald E.R. III"/>
            <person name="Hurov K.E."/>
            <person name="Luo J."/>
            <person name="Bakalarski C.E."/>
            <person name="Zhao Z."/>
            <person name="Solimini N."/>
            <person name="Lerenthal Y."/>
            <person name="Shiloh Y."/>
            <person name="Gygi S.P."/>
            <person name="Elledge S.J."/>
        </authorList>
    </citation>
    <scope>IDENTIFICATION BY MASS SPECTROMETRY [LARGE SCALE ANALYSIS]</scope>
    <source>
        <tissue>Embryonic kidney</tissue>
    </source>
</reference>
<reference key="11">
    <citation type="journal article" date="2008" name="Proteomics">
        <title>Large-scale phosphoproteome analysis of human liver tissue by enrichment and fractionation of phosphopeptides with strong anion exchange chromatography.</title>
        <authorList>
            <person name="Han G."/>
            <person name="Ye M."/>
            <person name="Zhou H."/>
            <person name="Jiang X."/>
            <person name="Feng S."/>
            <person name="Jiang X."/>
            <person name="Tian R."/>
            <person name="Wan D."/>
            <person name="Zou H."/>
            <person name="Gu J."/>
        </authorList>
    </citation>
    <scope>PHOSPHORYLATION [LARGE SCALE ANALYSIS] AT SER-408</scope>
    <scope>IDENTIFICATION BY MASS SPECTROMETRY [LARGE SCALE ANALYSIS]</scope>
    <source>
        <tissue>Liver</tissue>
    </source>
</reference>
<reference key="12">
    <citation type="journal article" date="2009" name="J. Biol. Chem.">
        <title>Phosphorylation of Tyr-398 and Tyr-402 in occludin prevents its interaction with ZO-1 and destabilizes its assembly at the tight junctions.</title>
        <authorList>
            <person name="Elias B.C."/>
            <person name="Suzuki T."/>
            <person name="Seth A."/>
            <person name="Giorgianni F."/>
            <person name="Kale G."/>
            <person name="Shen L."/>
            <person name="Turner J.R."/>
            <person name="Naren A."/>
            <person name="Desiderio D.M."/>
            <person name="Rao R."/>
        </authorList>
    </citation>
    <scope>INTERACTION WITH TJP1</scope>
    <scope>PHOSPHORYLATION AT TYR-398 AND TYR-402</scope>
    <scope>MUTAGENESIS OF TYR-398 AND TYR-402</scope>
    <scope>SUBCELLULAR LOCATION</scope>
</reference>
<reference key="13">
    <citation type="journal article" date="2009" name="J. Biol. Chem.">
        <title>Density-enhanced phosphatase 1 regulates phosphorylation of tight junction proteins and enhances barrier function of epithelial cells.</title>
        <authorList>
            <person name="Sallee J.L."/>
            <person name="Burridge K."/>
        </authorList>
    </citation>
    <scope>PHOSPHORYLATION</scope>
    <scope>DEPHOSPHORYLATION BY PTPRJ</scope>
    <scope>SUBCELLULAR LOCATION</scope>
</reference>
<reference key="14">
    <citation type="journal article" date="2009" name="Proc. Natl. Acad. Sci. U.S.A.">
        <title>PKC eta regulates occludin phosphorylation and epithelial tight junction integrity.</title>
        <authorList>
            <person name="Suzuki T."/>
            <person name="Elias B.C."/>
            <person name="Seth A."/>
            <person name="Shen L."/>
            <person name="Turner J.R."/>
            <person name="Giorgianni F."/>
            <person name="Desiderio D."/>
            <person name="Guntaka R."/>
            <person name="Rao R."/>
        </authorList>
    </citation>
    <scope>FUNCTION</scope>
    <scope>SUBCELLULAR LOCATION</scope>
    <scope>PHOSPHORYLATION AT THR-403 AND THR-404</scope>
    <scope>MUTAGENESIS OF THR-404</scope>
</reference>
<reference key="15">
    <citation type="journal article" date="2009" name="Nature">
        <title>Human occludin is a hepatitis C virus entry factor required for infection of mouse cells.</title>
        <authorList>
            <person name="Ploss A."/>
            <person name="Evans M.J."/>
            <person name="Gaysinskaya V.A."/>
            <person name="Panis M."/>
            <person name="You H."/>
            <person name="de Jong Y.P."/>
            <person name="Rice C.M."/>
        </authorList>
    </citation>
    <scope>FUNCTION (MICROBIAL INFECTION)</scope>
</reference>
<reference key="16">
    <citation type="journal article" date="2010" name="J. Biol. Chem.">
        <title>Claudin association with CD81 defines hepatitis C virus entry.</title>
        <authorList>
            <person name="Harris H.J."/>
            <person name="Davis C."/>
            <person name="Mullins J.G."/>
            <person name="Hu K."/>
            <person name="Goodall M."/>
            <person name="Farquhar M.J."/>
            <person name="Mee C.J."/>
            <person name="McCaffrey K."/>
            <person name="Young S."/>
            <person name="Drummer H."/>
            <person name="Balfe P."/>
            <person name="McKeating J.A."/>
        </authorList>
    </citation>
    <scope>INTERACTION WITH CLDN1; CLDN6; CLDN9; CLDN11; CLDN12 AND CLDN17</scope>
    <scope>FUNCTION (MICROBIAL INFECTION)</scope>
</reference>
<reference key="17">
    <citation type="journal article" date="2011" name="FEBS Lett.">
        <title>Phospholipid scramblase 1 mediates hepatitis C virus entry into host cells.</title>
        <authorList>
            <person name="Gong Q."/>
            <person name="Cheng M."/>
            <person name="Chen H."/>
            <person name="Liu X."/>
            <person name="Si Y."/>
            <person name="Yang Y."/>
            <person name="Yuan Y."/>
            <person name="Jin C."/>
            <person name="Yang W."/>
            <person name="He F."/>
            <person name="Wang J."/>
        </authorList>
    </citation>
    <scope>INTERACTION WITH PLSCR1</scope>
</reference>
<reference key="18">
    <citation type="journal article" date="2011" name="Sci. Signal.">
        <title>System-wide temporal characterization of the proteome and phosphoproteome of human embryonic stem cell differentiation.</title>
        <authorList>
            <person name="Rigbolt K.T."/>
            <person name="Prokhorova T.A."/>
            <person name="Akimov V."/>
            <person name="Henningsen J."/>
            <person name="Johansen P.T."/>
            <person name="Kratchmarova I."/>
            <person name="Kassem M."/>
            <person name="Mann M."/>
            <person name="Olsen J.V."/>
            <person name="Blagoev B."/>
        </authorList>
    </citation>
    <scope>PHOSPHORYLATION [LARGE SCALE ANALYSIS] AT SER-321; SER-369 AND SER-370</scope>
    <scope>IDENTIFICATION BY MASS SPECTROMETRY [LARGE SCALE ANALYSIS]</scope>
</reference>
<reference key="19">
    <citation type="journal article" date="2014" name="J. Proteomics">
        <title>An enzyme assisted RP-RPLC approach for in-depth analysis of human liver phosphoproteome.</title>
        <authorList>
            <person name="Bian Y."/>
            <person name="Song C."/>
            <person name="Cheng K."/>
            <person name="Dong M."/>
            <person name="Wang F."/>
            <person name="Huang J."/>
            <person name="Sun D."/>
            <person name="Wang L."/>
            <person name="Ye M."/>
            <person name="Zou H."/>
        </authorList>
    </citation>
    <scope>PHOSPHORYLATION [LARGE SCALE ANALYSIS] AT SER-313; TYR-368 AND SER-408</scope>
    <scope>IDENTIFICATION BY MASS SPECTROMETRY [LARGE SCALE ANALYSIS]</scope>
    <source>
        <tissue>Liver</tissue>
    </source>
</reference>
<reference key="20">
    <citation type="journal article" date="2009" name="J. Proteome Res.">
        <title>Identification and analysis of occludin phosphosites: a combined mass spectrometry and bioinformatics approach.</title>
        <authorList>
            <person name="Sundstrom J.M."/>
            <person name="Tash B.R."/>
            <person name="Murakami T."/>
            <person name="Flanagan J.M."/>
            <person name="Bewley M.C."/>
            <person name="Stanley B.A."/>
            <person name="Gonsar K.B."/>
            <person name="Antonetti D.A."/>
        </authorList>
    </citation>
    <scope>X-RAY CRYSTALLOGRAPHY (2.0 ANGSTROMS) OF 416-522</scope>
    <scope>PHOSPHORYLATION AT SER-490</scope>
</reference>
<reference key="21">
    <citation type="journal article" date="2010" name="Am. J. Hum. Genet.">
        <title>Recessive mutations in the gene encoding the tight junction protein occludin cause band-like calcification with simplified gyration and polymicrogyria.</title>
        <authorList>
            <person name="O'Driscoll M.C."/>
            <person name="Daly S.B."/>
            <person name="Urquhart J.E."/>
            <person name="Black G.C."/>
            <person name="Pilz D.T."/>
            <person name="Brockmann K."/>
            <person name="McEntagart M."/>
            <person name="Abdel-Salam G."/>
            <person name="Zaki M."/>
            <person name="Wolf N.I."/>
            <person name="Ladda R.L."/>
            <person name="Sell S."/>
            <person name="D'Arrigo S."/>
            <person name="Squier W."/>
            <person name="Dobyns W.B."/>
            <person name="Livingston J.H."/>
            <person name="Crow Y.J."/>
        </authorList>
    </citation>
    <scope>VARIANT PTORCH1 SER-219</scope>
</reference>
<reference key="22">
    <citation type="journal article" date="2013" name="J. Biol. Chem.">
        <title>Group A streptococcal cysteine protease cleaves epithelial junctions and contributes to bacterial translocation.</title>
        <authorList>
            <person name="Sumitomo T."/>
            <person name="Nakata M."/>
            <person name="Higashino M."/>
            <person name="Terao Y."/>
            <person name="Kawabata S."/>
        </authorList>
    </citation>
    <scope>PROTEOLYTIC CLEAVAGE (MICROBIAL INFECTION)</scope>
</reference>
<reference key="23">
    <citation type="journal article" date="2013" name="J. Cell Sci.">
        <title>Analysis of the 'angulin' proteins LSR, ILDR1 and ILDR2--tricellulin recruitment, epithelial barrier function and implication in deafness pathogenesis.</title>
        <authorList>
            <person name="Higashi T."/>
            <person name="Tokuda S."/>
            <person name="Kitajiri S."/>
            <person name="Masuda S."/>
            <person name="Nakamura H."/>
            <person name="Oda Y."/>
            <person name="Furuse M."/>
        </authorList>
    </citation>
    <scope>SUBCELLULAR LOCATION</scope>
    <scope>TISSUE SPECIFICITY</scope>
    <scope>INTERACTION WITH LSR; ILDR1 AND ILDR2</scope>
</reference>
<reference key="24">
    <citation type="journal article" date="2014" name="Antioxid. Redox Signal.">
        <title>Highly conserved cysteines are involved in the oligomerization of occludin-redox dependency of the second extracellular loop.</title>
        <authorList>
            <person name="Bellmann C."/>
            <person name="Schreivogel S."/>
            <person name="Gunther R."/>
            <person name="Dabrowski S."/>
            <person name="Schumann M."/>
            <person name="Wolburg H."/>
            <person name="Blasig I.E."/>
        </authorList>
    </citation>
    <scope>DISULFIDE BOND</scope>
</reference>
<reference key="25">
    <citation type="journal article" date="2019" name="Cell. Mol. Life Sci.">
        <title>Tight junction proteins at the blood-brain barrier: far more than claudin-5.</title>
        <authorList>
            <person name="Berndt P."/>
            <person name="Winkler L."/>
            <person name="Cording J."/>
            <person name="Breitkreuz-Korff O."/>
            <person name="Rex A."/>
            <person name="Dithmer S."/>
            <person name="Rausch V."/>
            <person name="Blasig R."/>
            <person name="Richter M."/>
            <person name="Sporbert A."/>
            <person name="Wolburg H."/>
            <person name="Blasig I.E."/>
            <person name="Haseloff R.F."/>
        </authorList>
    </citation>
    <scope>SUBCELLULAR LOCATION</scope>
</reference>
<evidence type="ECO:0000250" key="1"/>
<evidence type="ECO:0000250" key="2">
    <source>
        <dbReference type="UniProtKB" id="Q61146"/>
    </source>
</evidence>
<evidence type="ECO:0000255" key="3"/>
<evidence type="ECO:0000255" key="4">
    <source>
        <dbReference type="PROSITE-ProRule" id="PRU00581"/>
    </source>
</evidence>
<evidence type="ECO:0000255" key="5">
    <source>
        <dbReference type="PROSITE-ProRule" id="PRU01324"/>
    </source>
</evidence>
<evidence type="ECO:0000256" key="6">
    <source>
        <dbReference type="SAM" id="MobiDB-lite"/>
    </source>
</evidence>
<evidence type="ECO:0000269" key="7">
    <source>
    </source>
</evidence>
<evidence type="ECO:0000269" key="8">
    <source>
    </source>
</evidence>
<evidence type="ECO:0000269" key="9">
    <source>
    </source>
</evidence>
<evidence type="ECO:0000269" key="10">
    <source>
    </source>
</evidence>
<evidence type="ECO:0000269" key="11">
    <source>
    </source>
</evidence>
<evidence type="ECO:0000269" key="12">
    <source>
    </source>
</evidence>
<evidence type="ECO:0000269" key="13">
    <source>
    </source>
</evidence>
<evidence type="ECO:0000269" key="14">
    <source>
    </source>
</evidence>
<evidence type="ECO:0000269" key="15">
    <source>
    </source>
</evidence>
<evidence type="ECO:0000269" key="16">
    <source>
    </source>
</evidence>
<evidence type="ECO:0000269" key="17">
    <source>
    </source>
</evidence>
<evidence type="ECO:0000269" key="18">
    <source>
    </source>
</evidence>
<evidence type="ECO:0000269" key="19">
    <source>
    </source>
</evidence>
<evidence type="ECO:0000269" key="20">
    <source>
    </source>
</evidence>
<evidence type="ECO:0000303" key="21">
    <source>
    </source>
</evidence>
<evidence type="ECO:0000305" key="22"/>
<evidence type="ECO:0007744" key="23">
    <source>
    </source>
</evidence>
<evidence type="ECO:0007744" key="24">
    <source>
    </source>
</evidence>
<evidence type="ECO:0007744" key="25">
    <source>
    </source>
</evidence>
<evidence type="ECO:0007829" key="26">
    <source>
        <dbReference type="PDB" id="1XAW"/>
    </source>
</evidence>
<name>OCLN_HUMAN</name>
<proteinExistence type="evidence at protein level"/>
<feature type="chain" id="PRO_0000146739" description="Occludin">
    <location>
        <begin position="1"/>
        <end position="522"/>
    </location>
</feature>
<feature type="topological domain" description="Cytoplasmic" evidence="3">
    <location>
        <begin position="1"/>
        <end position="66"/>
    </location>
</feature>
<feature type="transmembrane region" description="Helical" evidence="3">
    <location>
        <begin position="67"/>
        <end position="89"/>
    </location>
</feature>
<feature type="topological domain" description="Extracellular" evidence="20">
    <location>
        <begin position="90"/>
        <end position="135"/>
    </location>
</feature>
<feature type="transmembrane region" description="Helical" evidence="3">
    <location>
        <begin position="136"/>
        <end position="160"/>
    </location>
</feature>
<feature type="topological domain" description="Cytoplasmic" evidence="3">
    <location>
        <begin position="161"/>
        <end position="170"/>
    </location>
</feature>
<feature type="transmembrane region" description="Helical" evidence="3">
    <location>
        <begin position="171"/>
        <end position="195"/>
    </location>
</feature>
<feature type="topological domain" description="Extracellular" evidence="3">
    <location>
        <begin position="196"/>
        <end position="243"/>
    </location>
</feature>
<feature type="transmembrane region" description="Helical" evidence="3">
    <location>
        <begin position="244"/>
        <end position="265"/>
    </location>
</feature>
<feature type="topological domain" description="Cytoplasmic" evidence="3">
    <location>
        <begin position="266"/>
        <end position="522"/>
    </location>
</feature>
<feature type="domain" description="MARVEL" evidence="4">
    <location>
        <begin position="60"/>
        <end position="269"/>
    </location>
</feature>
<feature type="domain" description="OCEL" evidence="5">
    <location>
        <begin position="414"/>
        <end position="522"/>
    </location>
</feature>
<feature type="region of interest" description="Disordered" evidence="6">
    <location>
        <begin position="1"/>
        <end position="20"/>
    </location>
</feature>
<feature type="region of interest" description="Disordered" evidence="6">
    <location>
        <begin position="360"/>
        <end position="407"/>
    </location>
</feature>
<feature type="coiled-coil region" evidence="3">
    <location>
        <begin position="426"/>
        <end position="489"/>
    </location>
</feature>
<feature type="compositionally biased region" description="Polar residues" evidence="6">
    <location>
        <begin position="367"/>
        <end position="376"/>
    </location>
</feature>
<feature type="compositionally biased region" description="Basic residues" evidence="6">
    <location>
        <begin position="381"/>
        <end position="390"/>
    </location>
</feature>
<feature type="compositionally biased region" description="Basic and acidic residues" evidence="6">
    <location>
        <begin position="391"/>
        <end position="400"/>
    </location>
</feature>
<feature type="modified residue" description="Phosphoserine" evidence="2">
    <location>
        <position position="302"/>
    </location>
</feature>
<feature type="modified residue" description="Phosphothreonine" evidence="2">
    <location>
        <position position="305"/>
    </location>
</feature>
<feature type="modified residue" description="Phosphoserine" evidence="25">
    <location>
        <position position="313"/>
    </location>
</feature>
<feature type="modified residue" description="Phosphoserine" evidence="24">
    <location>
        <position position="321"/>
    </location>
</feature>
<feature type="modified residue" description="Phosphoserine" evidence="2">
    <location>
        <position position="340"/>
    </location>
</feature>
<feature type="modified residue" description="Phosphotyrosine" evidence="25">
    <location>
        <position position="368"/>
    </location>
</feature>
<feature type="modified residue" description="Phosphoserine" evidence="24">
    <location>
        <position position="369"/>
    </location>
</feature>
<feature type="modified residue" description="Phosphoserine" evidence="24">
    <location>
        <position position="370"/>
    </location>
</feature>
<feature type="modified residue" description="Phosphotyrosine" evidence="8">
    <location>
        <position position="398"/>
    </location>
</feature>
<feature type="modified residue" description="Phosphotyrosine" evidence="8">
    <location>
        <position position="402"/>
    </location>
</feature>
<feature type="modified residue" description="Phosphothreonine; by PKC/PRKCH" evidence="9">
    <location>
        <position position="403"/>
    </location>
</feature>
<feature type="modified residue" description="Phosphothreonine; by PKC/PRKCH" evidence="9">
    <location>
        <position position="404"/>
    </location>
</feature>
<feature type="modified residue" description="Phosphoserine" evidence="23 25">
    <location>
        <position position="408"/>
    </location>
</feature>
<feature type="modified residue" description="Phosphoserine" evidence="10">
    <location>
        <position position="490"/>
    </location>
</feature>
<feature type="disulfide bond" evidence="18">
    <location>
        <begin position="216"/>
        <end position="237"/>
    </location>
</feature>
<feature type="splice variant" id="VSP_043872" description="In isoform 4 and isoform 5." evidence="21">
    <location>
        <begin position="1"/>
        <end position="251"/>
    </location>
</feature>
<feature type="splice variant" id="VSP_043873" description="In isoform 6." evidence="21">
    <original>DEILHFYKWTSPPGVIRILS</original>
    <variation>ESLQAVKEQIVTHQEDGWRL</variation>
    <location>
        <begin position="50"/>
        <end position="69"/>
    </location>
</feature>
<feature type="splice variant" id="VSP_043874" description="In isoform 7." evidence="21">
    <original>ILHFYKWTSPPGVIRILSM</original>
    <variation>MTIEKKVKSTWLLLMNTID</variation>
    <location>
        <begin position="52"/>
        <end position="70"/>
    </location>
</feature>
<feature type="splice variant" id="VSP_043875" description="In isoform 6." evidence="21">
    <location>
        <position position="70"/>
    </location>
</feature>
<feature type="splice variant" id="VSP_043876" description="In isoform 6 and isoform 7." evidence="21">
    <location>
        <begin position="71"/>
        <end position="522"/>
    </location>
</feature>
<feature type="splice variant" id="VSP_043877" description="In isoform 2." evidence="22">
    <location>
        <begin position="244"/>
        <end position="297"/>
    </location>
</feature>
<feature type="splice variant" id="VSP_043878" description="In isoform 5." evidence="21">
    <location>
        <begin position="252"/>
        <end position="322"/>
    </location>
</feature>
<feature type="splice variant" id="VSP_043879" description="In isoform 3." evidence="21">
    <original>AAADEYNRLKQVKGSADYKSKKNHCKQLKSKLSHIKKMVGDYDRQKT</original>
    <variation>VNST</variation>
    <location>
        <begin position="476"/>
        <end position="522"/>
    </location>
</feature>
<feature type="sequence variant" id="VAR_064910" description="In PTORCH1; dbSNP:rs267606926." evidence="14">
    <original>F</original>
    <variation>S</variation>
    <location>
        <position position="219"/>
    </location>
</feature>
<feature type="mutagenesis site" description="Loss of phosphorylation and loss of regulation of TJP1 binding; when associated with A-402." evidence="8">
    <original>Y</original>
    <variation>A</variation>
    <location>
        <position position="398"/>
    </location>
</feature>
<feature type="mutagenesis site" description="Loss of phosphorylation, almost complete loss of binding to TJP1, loss of regulation of TJP1 binding and loss of localization to plasma membrane and sites of cell-cell contact; when associated with D-402." evidence="8">
    <original>Y</original>
    <variation>D</variation>
    <location>
        <position position="398"/>
    </location>
</feature>
<feature type="mutagenesis site" description="Loss of phosphorylation, decrease in binding to TJP1 and significant loss of regulation of TJP1 binding; when associated with F-402." evidence="8">
    <original>Y</original>
    <variation>F</variation>
    <location>
        <position position="398"/>
    </location>
</feature>
<feature type="mutagenesis site" description="Loss of phosphorylation and loss of regulation of TJP1 binding; when associated with A-398." evidence="8">
    <original>Y</original>
    <variation>A</variation>
    <location>
        <position position="402"/>
    </location>
</feature>
<feature type="mutagenesis site" description="Loss of phosphorylation, almost complete loss of binding to TJP1, loss of regulation of TJP1 binding and loss of localization to plasma membrane and sites of cell-cell contact; when associated with D-398." evidence="8">
    <original>Y</original>
    <variation>D</variation>
    <location>
        <position position="402"/>
    </location>
</feature>
<feature type="mutagenesis site" description="Loss of phosphorylation, decrease in binding to TJP1 and significant loss of regulation of TJP1 binding; when associated with F-398." evidence="8">
    <original>Y</original>
    <variation>F</variation>
    <location>
        <position position="402"/>
    </location>
</feature>
<feature type="mutagenesis site" description="Loss of localization to the tight junctions." evidence="9">
    <original>T</original>
    <variation>A</variation>
    <location>
        <position position="404"/>
    </location>
</feature>
<feature type="sequence conflict" description="In Ref. 7; AAH29886." evidence="22" ref="7">
    <original>L</original>
    <variation>S</variation>
    <location>
        <position position="233"/>
    </location>
</feature>
<feature type="turn" evidence="26">
    <location>
        <begin position="417"/>
        <end position="419"/>
    </location>
</feature>
<feature type="helix" evidence="26">
    <location>
        <begin position="426"/>
        <end position="466"/>
    </location>
</feature>
<feature type="helix" evidence="26">
    <location>
        <begin position="472"/>
        <end position="488"/>
    </location>
</feature>
<feature type="helix" evidence="26">
    <location>
        <begin position="491"/>
        <end position="520"/>
    </location>
</feature>